<organism>
    <name type="scientific">Macaca fascicularis</name>
    <name type="common">Crab-eating macaque</name>
    <name type="synonym">Cynomolgus monkey</name>
    <dbReference type="NCBI Taxonomy" id="9541"/>
    <lineage>
        <taxon>Eukaryota</taxon>
        <taxon>Metazoa</taxon>
        <taxon>Chordata</taxon>
        <taxon>Craniata</taxon>
        <taxon>Vertebrata</taxon>
        <taxon>Euteleostomi</taxon>
        <taxon>Mammalia</taxon>
        <taxon>Eutheria</taxon>
        <taxon>Euarchontoglires</taxon>
        <taxon>Primates</taxon>
        <taxon>Haplorrhini</taxon>
        <taxon>Catarrhini</taxon>
        <taxon>Cercopithecidae</taxon>
        <taxon>Cercopithecinae</taxon>
        <taxon>Macaca</taxon>
    </lineage>
</organism>
<sequence length="311" mass="34906">PVLQDFSNKGTLWGFVPFVDEQQPTEIPIPITLHIGDYNMDGYPDALVILKNTSGSNQQAFLLENVPCNNASCEEARRMFKVYWELTDLNQIKDAMVATFFDIYEDGILDIVVLSKGYTKNDFAIHTLKNNFEADAYFVKVIVLSGLCSNDCPRKITPFGVNQPGPYIMYTTVDANGYLKNGSAGQLSQSAHLALQLPYNVLGLGRSANFLDHLYVGIPRPSGEKSIRKQEWTAIIPNSQLIVIPYPHNVPRSWSAKLYLTPSNIVLLTAIALIGVCVFILAIIGILHWQEKKADDREKRQEAHRFHFDAM</sequence>
<comment type="function">
    <text evidence="1">Modulator of T-cell function. Has a protective effect in graft versus host disease model (By similarity).</text>
</comment>
<comment type="subunit">
    <text evidence="2">Interacts with RUVBL1, RUVBL2 and alpha-tubulin.</text>
</comment>
<comment type="subcellular location">
    <subcellularLocation>
        <location evidence="1">Secreted</location>
    </subcellularLocation>
    <subcellularLocation>
        <location evidence="4">Cell membrane</location>
        <topology evidence="4">Single-pass type I membrane protein</topology>
    </subcellularLocation>
</comment>
<comment type="similarity">
    <text evidence="4">Belongs to the TIP family.</text>
</comment>
<comment type="sequence caution" evidence="4">
    <conflict type="erroneous initiation">
        <sequence resource="EMBL-CDS" id="BAB60741"/>
    </conflict>
</comment>
<reference key="1">
    <citation type="submission" date="2001-06" db="EMBL/GenBank/DDBJ databases">
        <title>Isolation of full-length cDNA clones from macaque brain cDNA libraries.</title>
        <authorList>
            <person name="Osada N."/>
            <person name="Hida M."/>
            <person name="Kusuda J."/>
            <person name="Tanuma R."/>
            <person name="Iseki K."/>
            <person name="Hirai M."/>
            <person name="Terao K."/>
            <person name="Suzuki Y."/>
            <person name="Sugano S."/>
            <person name="Hashimoto K."/>
        </authorList>
    </citation>
    <scope>NUCLEOTIDE SEQUENCE [LARGE SCALE MRNA]</scope>
    <source>
        <tissue>Medulla oblongata</tissue>
    </source>
</reference>
<feature type="chain" id="PRO_0000059046" description="T-cell immunomodulatory protein">
    <location>
        <begin position="1" status="less than"/>
        <end position="311"/>
    </location>
</feature>
<feature type="transmembrane region" description="Helical" evidence="3">
    <location>
        <begin position="266"/>
        <end position="286"/>
    </location>
</feature>
<feature type="glycosylation site" description="N-linked (GlcNAc...) asparagine" evidence="3">
    <location>
        <position position="52"/>
    </location>
</feature>
<feature type="glycosylation site" description="N-linked (GlcNAc...) asparagine" evidence="3">
    <location>
        <position position="70"/>
    </location>
</feature>
<feature type="glycosylation site" description="N-linked (GlcNAc...) asparagine" evidence="3">
    <location>
        <position position="181"/>
    </location>
</feature>
<feature type="non-terminal residue">
    <location>
        <position position="1"/>
    </location>
</feature>
<proteinExistence type="evidence at transcript level"/>
<accession>Q95KC8</accession>
<evidence type="ECO:0000250" key="1"/>
<evidence type="ECO:0000250" key="2">
    <source>
        <dbReference type="UniProtKB" id="Q8TB96"/>
    </source>
</evidence>
<evidence type="ECO:0000255" key="3"/>
<evidence type="ECO:0000305" key="4"/>
<protein>
    <recommendedName>
        <fullName>T-cell immunomodulatory protein</fullName>
        <shortName>Protein TIP</shortName>
    </recommendedName>
    <alternativeName>
        <fullName>Integrin-alpha FG-GAP repeat-containing protein 1</fullName>
    </alternativeName>
    <alternativeName>
        <fullName evidence="2">Linkin</fullName>
    </alternativeName>
</protein>
<gene>
    <name evidence="2" type="primary">ITFG1</name>
    <name evidence="2" type="synonym">LNKN-1</name>
    <name evidence="2" type="synonym">TIP</name>
    <name type="ORF">QmoA-10172</name>
</gene>
<keyword id="KW-1003">Cell membrane</keyword>
<keyword id="KW-0325">Glycoprotein</keyword>
<keyword id="KW-0472">Membrane</keyword>
<keyword id="KW-1185">Reference proteome</keyword>
<keyword id="KW-0964">Secreted</keyword>
<keyword id="KW-0812">Transmembrane</keyword>
<keyword id="KW-1133">Transmembrane helix</keyword>
<dbReference type="EMBL" id="AB062962">
    <property type="protein sequence ID" value="BAB60741.1"/>
    <property type="status" value="ALT_INIT"/>
    <property type="molecule type" value="mRNA"/>
</dbReference>
<dbReference type="STRING" id="9541.ENSMFAP00000038388"/>
<dbReference type="GlyCosmos" id="Q95KC8">
    <property type="glycosylation" value="3 sites, No reported glycans"/>
</dbReference>
<dbReference type="eggNOG" id="KOG4550">
    <property type="taxonomic scope" value="Eukaryota"/>
</dbReference>
<dbReference type="Proteomes" id="UP000233100">
    <property type="component" value="Unplaced"/>
</dbReference>
<dbReference type="GO" id="GO:0005576">
    <property type="term" value="C:extracellular region"/>
    <property type="evidence" value="ECO:0007669"/>
    <property type="project" value="UniProtKB-SubCell"/>
</dbReference>
<dbReference type="GO" id="GO:0005886">
    <property type="term" value="C:plasma membrane"/>
    <property type="evidence" value="ECO:0007669"/>
    <property type="project" value="UniProtKB-SubCell"/>
</dbReference>
<dbReference type="InterPro" id="IPR028994">
    <property type="entry name" value="Integrin_alpha_N"/>
</dbReference>
<dbReference type="InterPro" id="IPR024881">
    <property type="entry name" value="Tip"/>
</dbReference>
<dbReference type="PANTHER" id="PTHR13412:SF0">
    <property type="entry name" value="T-CELL IMMUNOMODULATORY PROTEIN"/>
    <property type="match status" value="1"/>
</dbReference>
<dbReference type="PANTHER" id="PTHR13412">
    <property type="entry name" value="T-CELL IMMUNOMODULATORY PROTEIN HOMOLOG"/>
    <property type="match status" value="1"/>
</dbReference>
<dbReference type="Pfam" id="PF23122">
    <property type="entry name" value="C2_ITFG1"/>
    <property type="match status" value="1"/>
</dbReference>
<dbReference type="SUPFAM" id="SSF69318">
    <property type="entry name" value="Integrin alpha N-terminal domain"/>
    <property type="match status" value="1"/>
</dbReference>
<name>TIP_MACFA</name>